<comment type="function">
    <text evidence="1">Probably involved in ribonucleotide reductase function.</text>
</comment>
<comment type="similarity">
    <text evidence="1">Belongs to the NrdI family.</text>
</comment>
<keyword id="KW-1185">Reference proteome</keyword>
<accession>Q1GJB3</accession>
<reference key="1">
    <citation type="submission" date="2006-05" db="EMBL/GenBank/DDBJ databases">
        <title>Complete sequence of chromosome of Silicibacter sp. TM1040.</title>
        <authorList>
            <consortium name="US DOE Joint Genome Institute"/>
            <person name="Copeland A."/>
            <person name="Lucas S."/>
            <person name="Lapidus A."/>
            <person name="Barry K."/>
            <person name="Detter J.C."/>
            <person name="Glavina del Rio T."/>
            <person name="Hammon N."/>
            <person name="Israni S."/>
            <person name="Dalin E."/>
            <person name="Tice H."/>
            <person name="Pitluck S."/>
            <person name="Brettin T."/>
            <person name="Bruce D."/>
            <person name="Han C."/>
            <person name="Tapia R."/>
            <person name="Goodwin L."/>
            <person name="Thompson L.S."/>
            <person name="Gilna P."/>
            <person name="Schmutz J."/>
            <person name="Larimer F."/>
            <person name="Land M."/>
            <person name="Hauser L."/>
            <person name="Kyrpides N."/>
            <person name="Kim E."/>
            <person name="Belas R."/>
            <person name="Moran M.A."/>
            <person name="Buchan A."/>
            <person name="Gonzalez J.M."/>
            <person name="Schell M.A."/>
            <person name="Sun F."/>
            <person name="Richardson P."/>
        </authorList>
    </citation>
    <scope>NUCLEOTIDE SEQUENCE [LARGE SCALE GENOMIC DNA]</scope>
    <source>
        <strain>TM1040</strain>
    </source>
</reference>
<name>NRDI_RUEST</name>
<evidence type="ECO:0000255" key="1">
    <source>
        <dbReference type="HAMAP-Rule" id="MF_00128"/>
    </source>
</evidence>
<protein>
    <recommendedName>
        <fullName evidence="1">Protein NrdI</fullName>
    </recommendedName>
</protein>
<proteinExistence type="inferred from homology"/>
<sequence length="140" mass="15244">MVGLVYYSSRSGNTARLMERLGLEALRLPQTEPSPEVDAPYVLVTPTFADGEGRGAVPKPVIKFLNNSRNRALLRGVIAGGNRNFGDTFALAGDVIAKKCNVPVLYRFELAGTETDIARMRAGLARFWAAQEQQTCLTQA</sequence>
<gene>
    <name evidence="1" type="primary">nrdI</name>
    <name type="ordered locus">TM1040_0520</name>
</gene>
<organism>
    <name type="scientific">Ruegeria sp. (strain TM1040)</name>
    <name type="common">Silicibacter sp.</name>
    <dbReference type="NCBI Taxonomy" id="292414"/>
    <lineage>
        <taxon>Bacteria</taxon>
        <taxon>Pseudomonadati</taxon>
        <taxon>Pseudomonadota</taxon>
        <taxon>Alphaproteobacteria</taxon>
        <taxon>Rhodobacterales</taxon>
        <taxon>Roseobacteraceae</taxon>
        <taxon>Ruegeria</taxon>
    </lineage>
</organism>
<dbReference type="EMBL" id="CP000377">
    <property type="protein sequence ID" value="ABF63253.1"/>
    <property type="molecule type" value="Genomic_DNA"/>
</dbReference>
<dbReference type="RefSeq" id="WP_011537868.1">
    <property type="nucleotide sequence ID" value="NC_008044.1"/>
</dbReference>
<dbReference type="SMR" id="Q1GJB3"/>
<dbReference type="STRING" id="292414.TM1040_0520"/>
<dbReference type="KEGG" id="sit:TM1040_0520"/>
<dbReference type="eggNOG" id="COG1780">
    <property type="taxonomic scope" value="Bacteria"/>
</dbReference>
<dbReference type="HOGENOM" id="CLU_114845_0_0_5"/>
<dbReference type="OrthoDB" id="350535at2"/>
<dbReference type="Proteomes" id="UP000000636">
    <property type="component" value="Chromosome"/>
</dbReference>
<dbReference type="GO" id="GO:0010181">
    <property type="term" value="F:FMN binding"/>
    <property type="evidence" value="ECO:0007669"/>
    <property type="project" value="InterPro"/>
</dbReference>
<dbReference type="GO" id="GO:0036211">
    <property type="term" value="P:protein modification process"/>
    <property type="evidence" value="ECO:0007669"/>
    <property type="project" value="InterPro"/>
</dbReference>
<dbReference type="Gene3D" id="3.40.50.360">
    <property type="match status" value="1"/>
</dbReference>
<dbReference type="HAMAP" id="MF_00128">
    <property type="entry name" value="NrdI"/>
    <property type="match status" value="1"/>
</dbReference>
<dbReference type="InterPro" id="IPR029039">
    <property type="entry name" value="Flavoprotein-like_sf"/>
</dbReference>
<dbReference type="InterPro" id="IPR020852">
    <property type="entry name" value="RNR_Ib_NrdI_bac"/>
</dbReference>
<dbReference type="InterPro" id="IPR004465">
    <property type="entry name" value="RNR_NrdI"/>
</dbReference>
<dbReference type="NCBIfam" id="TIGR00333">
    <property type="entry name" value="nrdI"/>
    <property type="match status" value="1"/>
</dbReference>
<dbReference type="PANTHER" id="PTHR37297">
    <property type="entry name" value="PROTEIN NRDI"/>
    <property type="match status" value="1"/>
</dbReference>
<dbReference type="PANTHER" id="PTHR37297:SF1">
    <property type="entry name" value="PROTEIN NRDI"/>
    <property type="match status" value="1"/>
</dbReference>
<dbReference type="Pfam" id="PF07972">
    <property type="entry name" value="Flavodoxin_NdrI"/>
    <property type="match status" value="1"/>
</dbReference>
<dbReference type="PIRSF" id="PIRSF005087">
    <property type="entry name" value="NrdI"/>
    <property type="match status" value="1"/>
</dbReference>
<dbReference type="SUPFAM" id="SSF52218">
    <property type="entry name" value="Flavoproteins"/>
    <property type="match status" value="1"/>
</dbReference>
<feature type="chain" id="PRO_1000016524" description="Protein NrdI">
    <location>
        <begin position="1"/>
        <end position="140"/>
    </location>
</feature>